<protein>
    <recommendedName>
        <fullName>mRNA export factor</fullName>
    </recommendedName>
    <alternativeName>
        <fullName>Immediate-early protein IE63</fullName>
    </alternativeName>
    <alternativeName>
        <fullName>Infected cell protein 27</fullName>
        <shortName>ICP27</shortName>
    </alternativeName>
</protein>
<reference key="1">
    <citation type="journal article" date="2006" name="J. Virol.">
        <title>Psittacid herpesvirus 1 and infectious laryngotracheitis virus: Comparative genome sequence analysis of two avian alphaherpesviruses.</title>
        <authorList>
            <person name="Thureen D.R."/>
            <person name="Keeler C.L. Jr."/>
        </authorList>
    </citation>
    <scope>NUCLEOTIDE SEQUENCE [LARGE SCALE GENOMIC DNA]</scope>
</reference>
<sequence>MQAEQTRCAAARGSAEMESLWHAAPGDEEIPLHPPPTPGAMSLESDSSLDTLAEKIECDLMDLLGDMGPPCDIDEEEDQLFAEALPPLYSQPTENPPPPNAANSIPEQAGKQPAEGKTNTERNERPMRRKRREDGDVGQPNPRRRTHARSRSPRAGSTSSQQPPSSSGGARKPCVRREAGDRETSEKPARGKYCAPFPRQAPHQCQSPPAQTASQKPPPRPQRPPSTTAYSPDRTPHDHQERRHEGAGKMIRSVVTKQDARKPPRRVPHRGCGTGRHGRRTPEKWGAPPSMVVPLKFTREYWEKHRNELKKPVWRDYSRSACTARDPARAHDSGAECPPTEKRDERRTCAPSQPRWLREDRNAARFFDKAKDAFGGLALPTDDMCTRNRDLLRAMADEVVDDDDCEDLDLTRQMCFPTMIGPQSRAAGPVGARMDSWSELCRRAAFLKARWSSQPSVTRVARAVRSLYLTNCSFDELLEACDETLTWMLWHQFEDERLCPHDPIFSNIYALVQGLVTRLGAVLHCHLAASKSPLADPTRTSELPLQSATCPLTLFLTFADRFARVMHGHPHVTLVGHKIVDHEGVLRTLYLPGMCARKIPVVLDQHANVCRKEECRLLCAQLLGKQYTVGKFLCCDLYA</sequence>
<feature type="chain" id="PRO_0000406858" description="mRNA export factor">
    <location>
        <begin position="1"/>
        <end position="639"/>
    </location>
</feature>
<feature type="zinc finger region" description="CHC2-type" evidence="2">
    <location>
        <begin position="525"/>
        <end position="615"/>
    </location>
</feature>
<feature type="region of interest" description="Disordered" evidence="3">
    <location>
        <begin position="1"/>
        <end position="45"/>
    </location>
</feature>
<feature type="region of interest" description="Disordered" evidence="3">
    <location>
        <begin position="63"/>
        <end position="287"/>
    </location>
</feature>
<feature type="region of interest" description="Disordered" evidence="3">
    <location>
        <begin position="322"/>
        <end position="355"/>
    </location>
</feature>
<feature type="compositionally biased region" description="Basic residues" evidence="3">
    <location>
        <begin position="142"/>
        <end position="152"/>
    </location>
</feature>
<feature type="compositionally biased region" description="Low complexity" evidence="3">
    <location>
        <begin position="153"/>
        <end position="169"/>
    </location>
</feature>
<feature type="compositionally biased region" description="Basic and acidic residues" evidence="3">
    <location>
        <begin position="175"/>
        <end position="189"/>
    </location>
</feature>
<feature type="compositionally biased region" description="Polar residues" evidence="3">
    <location>
        <begin position="203"/>
        <end position="215"/>
    </location>
</feature>
<feature type="compositionally biased region" description="Basic and acidic residues" evidence="3">
    <location>
        <begin position="234"/>
        <end position="247"/>
    </location>
</feature>
<feature type="compositionally biased region" description="Basic and acidic residues" evidence="3">
    <location>
        <begin position="326"/>
        <end position="348"/>
    </location>
</feature>
<feature type="binding site" evidence="2">
    <location>
        <position position="525"/>
    </location>
    <ligand>
        <name>Zn(2+)</name>
        <dbReference type="ChEBI" id="CHEBI:29105"/>
    </ligand>
</feature>
<feature type="binding site" evidence="2">
    <location>
        <position position="606"/>
    </location>
    <ligand>
        <name>Zn(2+)</name>
        <dbReference type="ChEBI" id="CHEBI:29105"/>
    </ligand>
</feature>
<feature type="binding site" evidence="2">
    <location>
        <position position="610"/>
    </location>
    <ligand>
        <name>Zn(2+)</name>
        <dbReference type="ChEBI" id="CHEBI:29105"/>
    </ligand>
</feature>
<feature type="binding site" evidence="2">
    <location>
        <position position="615"/>
    </location>
    <ligand>
        <name>Zn(2+)</name>
        <dbReference type="ChEBI" id="CHEBI:29105"/>
    </ligand>
</feature>
<dbReference type="EMBL" id="AY372243">
    <property type="protein sequence ID" value="AAQ73686.1"/>
    <property type="molecule type" value="Genomic_DNA"/>
</dbReference>
<dbReference type="RefSeq" id="NP_944380.1">
    <property type="nucleotide sequence ID" value="NC_005264.1"/>
</dbReference>
<dbReference type="SMR" id="Q6UDM4"/>
<dbReference type="GeneID" id="2657008"/>
<dbReference type="KEGG" id="vg:2657008"/>
<dbReference type="Proteomes" id="UP000006840">
    <property type="component" value="Segment"/>
</dbReference>
<dbReference type="GO" id="GO:0030430">
    <property type="term" value="C:host cell cytoplasm"/>
    <property type="evidence" value="ECO:0007669"/>
    <property type="project" value="UniProtKB-SubCell"/>
</dbReference>
<dbReference type="GO" id="GO:0042025">
    <property type="term" value="C:host cell nucleus"/>
    <property type="evidence" value="ECO:0007669"/>
    <property type="project" value="UniProtKB-SubCell"/>
</dbReference>
<dbReference type="GO" id="GO:0003723">
    <property type="term" value="F:RNA binding"/>
    <property type="evidence" value="ECO:0007669"/>
    <property type="project" value="UniProtKB-KW"/>
</dbReference>
<dbReference type="GO" id="GO:0008270">
    <property type="term" value="F:zinc ion binding"/>
    <property type="evidence" value="ECO:0007669"/>
    <property type="project" value="UniProtKB-KW"/>
</dbReference>
<dbReference type="GO" id="GO:0006355">
    <property type="term" value="P:regulation of DNA-templated transcription"/>
    <property type="evidence" value="ECO:0007669"/>
    <property type="project" value="InterPro"/>
</dbReference>
<dbReference type="InterPro" id="IPR008648">
    <property type="entry name" value="ICP27-like"/>
</dbReference>
<dbReference type="Pfam" id="PF05459">
    <property type="entry name" value="Herpes_UL69"/>
    <property type="match status" value="1"/>
</dbReference>
<keyword id="KW-0244">Early protein</keyword>
<keyword id="KW-1035">Host cytoplasm</keyword>
<keyword id="KW-1048">Host nucleus</keyword>
<keyword id="KW-0945">Host-virus interaction</keyword>
<keyword id="KW-0479">Metal-binding</keyword>
<keyword id="KW-1185">Reference proteome</keyword>
<keyword id="KW-0694">RNA-binding</keyword>
<keyword id="KW-0862">Zinc</keyword>
<keyword id="KW-0863">Zinc-finger</keyword>
<evidence type="ECO:0000250" key="1"/>
<evidence type="ECO:0000250" key="2">
    <source>
        <dbReference type="UniProtKB" id="P10238"/>
    </source>
</evidence>
<evidence type="ECO:0000256" key="3">
    <source>
        <dbReference type="SAM" id="MobiDB-lite"/>
    </source>
</evidence>
<evidence type="ECO:0000305" key="4"/>
<proteinExistence type="inferred from homology"/>
<organismHost>
    <name type="scientific">Amazona oratrix</name>
    <name type="common">yellow-headed parrot</name>
    <dbReference type="NCBI Taxonomy" id="152276"/>
</organismHost>
<comment type="function">
    <text evidence="1">Multifunctional regulator of the expression of viral genes that mediates nuclear export of viral intronless mRNAs. This immediate early (EI) protein promotes the nuclear export of viral intronless mRNAs (By similarity).</text>
</comment>
<comment type="subcellular location">
    <subcellularLocation>
        <location evidence="1">Host cytoplasm</location>
    </subcellularLocation>
    <subcellularLocation>
        <location evidence="1">Host nucleus</location>
    </subcellularLocation>
    <text evidence="1">Shuttles between the nucleus and the cytoplasm.</text>
</comment>
<comment type="similarity">
    <text evidence="4">Belongs to the HHV-1 ICP27 protein family.</text>
</comment>
<name>ICP27_PSHV1</name>
<gene>
    <name type="ORF">UL54</name>
</gene>
<organism>
    <name type="scientific">Psittacid herpesvirus 1 (isolate Amazon parrot/-/97-0001/1997)</name>
    <name type="common">PsHV-1</name>
    <name type="synonym">Pacheco's disease virus</name>
    <dbReference type="NCBI Taxonomy" id="670426"/>
    <lineage>
        <taxon>Viruses</taxon>
        <taxon>Duplodnaviria</taxon>
        <taxon>Heunggongvirae</taxon>
        <taxon>Peploviricota</taxon>
        <taxon>Herviviricetes</taxon>
        <taxon>Herpesvirales</taxon>
        <taxon>Orthoherpesviridae</taxon>
        <taxon>Alphaherpesvirinae</taxon>
        <taxon>Iltovirus</taxon>
        <taxon>Iltovirus psittacidalpha1</taxon>
        <taxon>Psittacid alphaherpesvirus 1</taxon>
    </lineage>
</organism>
<accession>Q6UDM4</accession>